<name>NSP1_ROTRF</name>
<proteinExistence type="inferred from homology"/>
<evidence type="ECO:0000255" key="1">
    <source>
        <dbReference type="HAMAP-Rule" id="MF_04088"/>
    </source>
</evidence>
<feature type="chain" id="PRO_0000149554" description="Non-structural protein 1">
    <location>
        <begin position="1"/>
        <end position="491"/>
    </location>
</feature>
<feature type="region of interest" description="RNA-binding" evidence="1">
    <location>
        <begin position="1"/>
        <end position="81"/>
    </location>
</feature>
<feature type="region of interest" description="Zinc-binding domain" evidence="1">
    <location>
        <begin position="42"/>
        <end position="79"/>
    </location>
</feature>
<feature type="region of interest" description="Important for cytoskeleton localization" evidence="1">
    <location>
        <begin position="82"/>
        <end position="176"/>
    </location>
</feature>
<feature type="region of interest" description="Interaction with host IRF3" evidence="1">
    <location>
        <begin position="320"/>
        <end position="491"/>
    </location>
</feature>
<feature type="short sequence motif" description="pLxIS motif" evidence="1">
    <location>
        <begin position="485"/>
        <end position="488"/>
    </location>
</feature>
<reference key="1">
    <citation type="journal article" date="1987" name="Virology">
        <title>Nucleotide sequence and expression in Escherichia coli of the gene encoding the nonstructural protein NCVP2 of bovine rotavirus.</title>
        <authorList>
            <person name="Bremont M."/>
            <person name="Charpilienne A."/>
            <person name="Chabanne D."/>
            <person name="Cohen J."/>
        </authorList>
    </citation>
    <scope>NUCLEOTIDE SEQUENCE [GENOMIC RNA]</scope>
</reference>
<accession>P12475</accession>
<organismHost>
    <name type="scientific">Bos taurus</name>
    <name type="common">Bovine</name>
    <dbReference type="NCBI Taxonomy" id="9913"/>
</organismHost>
<keyword id="KW-1035">Host cytoplasm</keyword>
<keyword id="KW-1037">Host cytoskeleton</keyword>
<keyword id="KW-0945">Host-virus interaction</keyword>
<keyword id="KW-1090">Inhibition of host innate immune response by virus</keyword>
<keyword id="KW-1092">Inhibition of host IRF3 by virus</keyword>
<keyword id="KW-1093">Inhibition of host IRF7 by virus</keyword>
<keyword id="KW-1113">Inhibition of host RLR pathway by virus</keyword>
<keyword id="KW-0922">Interferon antiviral system evasion</keyword>
<keyword id="KW-0479">Metal-binding</keyword>
<keyword id="KW-0694">RNA-binding</keyword>
<keyword id="KW-0899">Viral immunoevasion</keyword>
<comment type="function">
    <text evidence="1">Plays a role in the inhibition of host innate immunity by inducing the degradation of key host factors required to activate interferon production such as IRF3, IRF5 or IRF7. Associates with components of cullin RING ligases (CRLs) including CUL1 or CUL3, which are essential multisubunit ubiquitination complexes, to modulate their activities.</text>
</comment>
<comment type="subunit">
    <text evidence="1">Interacts (via C-terminus) with host IRF3; this interaction leads to IRF3 degradation. Interacts with host IRF7; this interaction leads to IRF7 degradation. Interacts with host CUL1 and CUL3.</text>
</comment>
<comment type="subcellular location">
    <subcellularLocation>
        <location evidence="1">Host cytoplasm</location>
        <location evidence="1">Host cytoskeleton</location>
    </subcellularLocation>
</comment>
<comment type="domain">
    <text evidence="1">The integrity of the zinc-binding domain in NSP1 is important for degradation of host IRF3.</text>
</comment>
<comment type="domain">
    <text evidence="1">The pLxIS motif targets host IRF3 for degradation; however phosphorylation of NSP1 pLxIS motif is not required for its activity.</text>
</comment>
<comment type="similarity">
    <text evidence="1">Belongs to the rotavirus NSP1 family.</text>
</comment>
<protein>
    <recommendedName>
        <fullName evidence="1">Non-structural protein 1</fullName>
        <shortName evidence="1">NSP1</shortName>
    </recommendedName>
    <alternativeName>
        <fullName evidence="1">NCVP2</fullName>
    </alternativeName>
    <alternativeName>
        <fullName evidence="1">Non-structural RNA-binding protein 53</fullName>
        <shortName evidence="1">NS53</shortName>
    </alternativeName>
</protein>
<sequence>MATFKDACYHYKRLNKLNSLVLKLGANDEWRPAPMTKYKGWCLDCCQYTNLTYCRGCALYHVCQWCSQYNRCFLDEEPHLLRMRTFKDVVTKEDIEGLLTMYETLFPINEKLVNKFINSVKQRKCRNEYLLEWYNHLLMPITLQALTINLEDNVYYIFGYYDCMEHENQTPFQFINLLEKYDKLLLDDRNFHRMSHLPVILQQEYALRYFSKSRFLSKGKKRLSRSDFSDNLMEDRHSPTSLMQVVRNCISIHINDCEWNKACTLIVDARNYISIMNSSYTEHYSVSQRCKLFTKYKFGIVSRLVKPNYIFSSHESCALNVHNCKWCQINNHYKVWEDFRLRKIYNNVMDFIRALMKSNGNVGHCSSQESVYKYIPDLFLICKTEKWNEAVEMLFNYLEPVDINGTEYVLLDYEVNWEVRGLVMQNMDGKVPRILNMNDTKKILSAMIFDWFDTRYMRETPMTTSTTNQLRTLNKRNELIDEYDLELSDVE</sequence>
<dbReference type="EMBL" id="M22308">
    <property type="protein sequence ID" value="AAA47316.1"/>
    <property type="molecule type" value="Genomic_RNA"/>
</dbReference>
<dbReference type="Proteomes" id="UP000007179">
    <property type="component" value="Genome"/>
</dbReference>
<dbReference type="GO" id="GO:0030430">
    <property type="term" value="C:host cell cytoplasm"/>
    <property type="evidence" value="ECO:0007669"/>
    <property type="project" value="UniProtKB-UniRule"/>
</dbReference>
<dbReference type="GO" id="GO:0044163">
    <property type="term" value="C:host cytoskeleton"/>
    <property type="evidence" value="ECO:0007669"/>
    <property type="project" value="UniProtKB-SubCell"/>
</dbReference>
<dbReference type="GO" id="GO:0046872">
    <property type="term" value="F:metal ion binding"/>
    <property type="evidence" value="ECO:0007669"/>
    <property type="project" value="UniProtKB-UniRule"/>
</dbReference>
<dbReference type="GO" id="GO:0003723">
    <property type="term" value="F:RNA binding"/>
    <property type="evidence" value="ECO:0007669"/>
    <property type="project" value="UniProtKB-UniRule"/>
</dbReference>
<dbReference type="GO" id="GO:0039548">
    <property type="term" value="P:symbiont-mediated suppression of host cytoplasmic pattern recognition receptor signaling pathway via inhibition of IRF3 activity"/>
    <property type="evidence" value="ECO:0007669"/>
    <property type="project" value="UniProtKB-UniRule"/>
</dbReference>
<dbReference type="GO" id="GO:0039557">
    <property type="term" value="P:symbiont-mediated suppression of host cytoplasmic pattern recognition receptor signaling pathway via inhibition of IRF7 activity"/>
    <property type="evidence" value="ECO:0007669"/>
    <property type="project" value="UniProtKB-UniRule"/>
</dbReference>
<dbReference type="HAMAP" id="MF_04088">
    <property type="entry name" value="ROTA_NSP1"/>
    <property type="match status" value="1"/>
</dbReference>
<dbReference type="InterPro" id="IPR002148">
    <property type="entry name" value="Rotavirus_NSP1"/>
</dbReference>
<dbReference type="Pfam" id="PF00981">
    <property type="entry name" value="Rota_NS53"/>
    <property type="match status" value="1"/>
</dbReference>
<organism>
    <name type="scientific">Rotavirus A (strain RVA/Cow/France/RF/1975/G6P6[1])</name>
    <name type="common">RV-A</name>
    <dbReference type="NCBI Taxonomy" id="10933"/>
    <lineage>
        <taxon>Viruses</taxon>
        <taxon>Riboviria</taxon>
        <taxon>Orthornavirae</taxon>
        <taxon>Duplornaviricota</taxon>
        <taxon>Resentoviricetes</taxon>
        <taxon>Reovirales</taxon>
        <taxon>Sedoreoviridae</taxon>
        <taxon>Rotavirus</taxon>
        <taxon>Rotavirus A</taxon>
    </lineage>
</organism>